<protein>
    <recommendedName>
        <fullName evidence="2">POC1 centriolar protein homolog A</fullName>
    </recommendedName>
    <alternativeName>
        <fullName evidence="6">WD repeat domain 51A</fullName>
    </alternativeName>
</protein>
<name>POC1A_DANRE</name>
<gene>
    <name evidence="7" type="primary">poc1a</name>
    <name evidence="7" type="synonym">wdr51a</name>
</gene>
<reference evidence="6" key="1">
    <citation type="submission" date="2003-01" db="EMBL/GenBank/DDBJ databases">
        <authorList>
            <consortium name="NIH - Zebrafish Gene Collection (ZGC) project"/>
        </authorList>
    </citation>
    <scope>NUCLEOTIDE SEQUENCE [LARGE SCALE MRNA]</scope>
    <source>
        <strain evidence="6">AB</strain>
    </source>
</reference>
<dbReference type="EMBL" id="BC045888">
    <property type="protein sequence ID" value="AAH45888.1"/>
    <property type="molecule type" value="mRNA"/>
</dbReference>
<dbReference type="RefSeq" id="NP_998214.1">
    <property type="nucleotide sequence ID" value="NM_213049.1"/>
</dbReference>
<dbReference type="SMR" id="Q7ZVF0"/>
<dbReference type="FunCoup" id="Q7ZVF0">
    <property type="interactions" value="415"/>
</dbReference>
<dbReference type="STRING" id="7955.ENSDARP00000099551"/>
<dbReference type="PaxDb" id="7955-ENSDARP00000099551"/>
<dbReference type="GeneID" id="406322"/>
<dbReference type="KEGG" id="dre:406322"/>
<dbReference type="AGR" id="ZFIN:ZDB-GENE-040426-1993"/>
<dbReference type="CTD" id="25886"/>
<dbReference type="ZFIN" id="ZDB-GENE-040426-1993">
    <property type="gene designation" value="poc1a"/>
</dbReference>
<dbReference type="eggNOG" id="ENOG502QSVJ">
    <property type="taxonomic scope" value="Eukaryota"/>
</dbReference>
<dbReference type="InParanoid" id="Q7ZVF0"/>
<dbReference type="OrthoDB" id="10264588at2759"/>
<dbReference type="PhylomeDB" id="Q7ZVF0"/>
<dbReference type="PRO" id="PR:Q7ZVF0"/>
<dbReference type="Proteomes" id="UP000000437">
    <property type="component" value="Chromosome 11"/>
</dbReference>
<dbReference type="GO" id="GO:0005814">
    <property type="term" value="C:centriole"/>
    <property type="evidence" value="ECO:0000318"/>
    <property type="project" value="GO_Central"/>
</dbReference>
<dbReference type="GO" id="GO:0036064">
    <property type="term" value="C:ciliary basal body"/>
    <property type="evidence" value="ECO:0000318"/>
    <property type="project" value="GO_Central"/>
</dbReference>
<dbReference type="GO" id="GO:0060271">
    <property type="term" value="P:cilium assembly"/>
    <property type="evidence" value="ECO:0000318"/>
    <property type="project" value="GO_Central"/>
</dbReference>
<dbReference type="CDD" id="cd00200">
    <property type="entry name" value="WD40"/>
    <property type="match status" value="1"/>
</dbReference>
<dbReference type="FunFam" id="2.130.10.10:FF:000235">
    <property type="entry name" value="POC1 centriolar protein homolog B"/>
    <property type="match status" value="1"/>
</dbReference>
<dbReference type="Gene3D" id="2.130.10.10">
    <property type="entry name" value="YVTN repeat-like/Quinoprotein amine dehydrogenase"/>
    <property type="match status" value="3"/>
</dbReference>
<dbReference type="InterPro" id="IPR020472">
    <property type="entry name" value="G-protein_beta_WD-40_rep"/>
</dbReference>
<dbReference type="InterPro" id="IPR015943">
    <property type="entry name" value="WD40/YVTN_repeat-like_dom_sf"/>
</dbReference>
<dbReference type="InterPro" id="IPR019775">
    <property type="entry name" value="WD40_repeat_CS"/>
</dbReference>
<dbReference type="InterPro" id="IPR036322">
    <property type="entry name" value="WD40_repeat_dom_sf"/>
</dbReference>
<dbReference type="InterPro" id="IPR001680">
    <property type="entry name" value="WD40_rpt"/>
</dbReference>
<dbReference type="InterPro" id="IPR050505">
    <property type="entry name" value="WDR55_POC1"/>
</dbReference>
<dbReference type="PANTHER" id="PTHR44019:SF2">
    <property type="entry name" value="POC1 CENTRIOLAR PROTEIN HOMOLOG A"/>
    <property type="match status" value="1"/>
</dbReference>
<dbReference type="PANTHER" id="PTHR44019">
    <property type="entry name" value="WD REPEAT-CONTAINING PROTEIN 55"/>
    <property type="match status" value="1"/>
</dbReference>
<dbReference type="Pfam" id="PF00400">
    <property type="entry name" value="WD40"/>
    <property type="match status" value="7"/>
</dbReference>
<dbReference type="PRINTS" id="PR00320">
    <property type="entry name" value="GPROTEINBRPT"/>
</dbReference>
<dbReference type="SMART" id="SM00320">
    <property type="entry name" value="WD40"/>
    <property type="match status" value="7"/>
</dbReference>
<dbReference type="SUPFAM" id="SSF50978">
    <property type="entry name" value="WD40 repeat-like"/>
    <property type="match status" value="1"/>
</dbReference>
<dbReference type="PROSITE" id="PS00678">
    <property type="entry name" value="WD_REPEATS_1"/>
    <property type="match status" value="3"/>
</dbReference>
<dbReference type="PROSITE" id="PS50082">
    <property type="entry name" value="WD_REPEATS_2"/>
    <property type="match status" value="7"/>
</dbReference>
<dbReference type="PROSITE" id="PS50294">
    <property type="entry name" value="WD_REPEATS_REGION"/>
    <property type="match status" value="1"/>
</dbReference>
<evidence type="ECO:0000250" key="1"/>
<evidence type="ECO:0000250" key="2">
    <source>
        <dbReference type="UniProtKB" id="Q8NBT0"/>
    </source>
</evidence>
<evidence type="ECO:0000255" key="3"/>
<evidence type="ECO:0000256" key="4">
    <source>
        <dbReference type="SAM" id="MobiDB-lite"/>
    </source>
</evidence>
<evidence type="ECO:0000305" key="5"/>
<evidence type="ECO:0000312" key="6">
    <source>
        <dbReference type="EMBL" id="AAH45888.1"/>
    </source>
</evidence>
<evidence type="ECO:0000312" key="7">
    <source>
        <dbReference type="ZFIN" id="ZDB-GENE-040426-1993"/>
    </source>
</evidence>
<sequence length="416" mass="45728">MSSALDDPTLERNFKGHRDAITSLDFSPSGKQIASGSVDASVMVWNMKPQSRAYRFTGHKDAVTCVQFSPSAHLLASSSRDKTVRLWVPSVKGESVLFRAHTGSVRSVCFSADGQSLLTASDDQSIKLWSVHRQKIICTLREHNNWVRCARFSPDGQLMVSVSDDRTVKLWDASSRQLIHTFCEPGGYSSYVDFHPSSTCIATASSDNTVRVWDIRTHTLLQHYQVHSAAVNALSFHPSGNHLLTASSDSTLKILDLLEGRLLYTLHGHQGSASCVSFSRSGDQFASAGSDQQVMVWRTNFDSVDYSRVLQQKRDHRTPSAQASGAAGDPESRSGQKTEVSPLLGVSAERSVREPTPQQQTDADGVPAALTSTLQHIIGQLDVLTQTVAILEQRLTLTEDKLKECLEQQHQALTEH</sequence>
<proteinExistence type="evidence at transcript level"/>
<accession>Q7ZVF0</accession>
<keyword id="KW-0970">Cilium biogenesis/degradation</keyword>
<keyword id="KW-0175">Coiled coil</keyword>
<keyword id="KW-1185">Reference proteome</keyword>
<keyword id="KW-0677">Repeat</keyword>
<keyword id="KW-0853">WD repeat</keyword>
<feature type="chain" id="PRO_0000395866" description="POC1 centriolar protein homolog A">
    <location>
        <begin position="1"/>
        <end position="416"/>
    </location>
</feature>
<feature type="repeat" description="WD 1" evidence="3">
    <location>
        <begin position="16"/>
        <end position="55"/>
    </location>
</feature>
<feature type="repeat" description="WD 2" evidence="3">
    <location>
        <begin position="58"/>
        <end position="97"/>
    </location>
</feature>
<feature type="repeat" description="WD 3" evidence="3">
    <location>
        <begin position="100"/>
        <end position="139"/>
    </location>
</feature>
<feature type="repeat" description="WD 4" evidence="3">
    <location>
        <begin position="142"/>
        <end position="181"/>
    </location>
</feature>
<feature type="repeat" description="WD 5" evidence="3">
    <location>
        <begin position="184"/>
        <end position="223"/>
    </location>
</feature>
<feature type="repeat" description="WD 6" evidence="3">
    <location>
        <begin position="226"/>
        <end position="265"/>
    </location>
</feature>
<feature type="repeat" description="WD 7" evidence="3">
    <location>
        <begin position="268"/>
        <end position="307"/>
    </location>
</feature>
<feature type="region of interest" description="Disordered" evidence="4">
    <location>
        <begin position="311"/>
        <end position="340"/>
    </location>
</feature>
<feature type="coiled-coil region" evidence="3">
    <location>
        <begin position="380"/>
        <end position="412"/>
    </location>
</feature>
<organism>
    <name type="scientific">Danio rerio</name>
    <name type="common">Zebrafish</name>
    <name type="synonym">Brachydanio rerio</name>
    <dbReference type="NCBI Taxonomy" id="7955"/>
    <lineage>
        <taxon>Eukaryota</taxon>
        <taxon>Metazoa</taxon>
        <taxon>Chordata</taxon>
        <taxon>Craniata</taxon>
        <taxon>Vertebrata</taxon>
        <taxon>Euteleostomi</taxon>
        <taxon>Actinopterygii</taxon>
        <taxon>Neopterygii</taxon>
        <taxon>Teleostei</taxon>
        <taxon>Ostariophysi</taxon>
        <taxon>Cypriniformes</taxon>
        <taxon>Danionidae</taxon>
        <taxon>Danioninae</taxon>
        <taxon>Danio</taxon>
    </lineage>
</organism>
<comment type="function">
    <text evidence="1">May play an important role in centriole assembly and/or stability and ciliogenesis.</text>
</comment>
<comment type="similarity">
    <text evidence="5">Belongs to the WD repeat POC1 family.</text>
</comment>